<dbReference type="EMBL" id="CP001279">
    <property type="protein sequence ID" value="ACM93514.1"/>
    <property type="molecule type" value="Genomic_DNA"/>
</dbReference>
<dbReference type="RefSeq" id="WP_015902566.1">
    <property type="nucleotide sequence ID" value="NC_012115.1"/>
</dbReference>
<dbReference type="SMR" id="B9L7K6"/>
<dbReference type="STRING" id="598659.NAMH_0191"/>
<dbReference type="KEGG" id="nam:NAMH_0191"/>
<dbReference type="eggNOG" id="COG3681">
    <property type="taxonomic scope" value="Bacteria"/>
</dbReference>
<dbReference type="HOGENOM" id="CLU_051840_0_0_7"/>
<dbReference type="OrthoDB" id="41906at2"/>
<dbReference type="Proteomes" id="UP000000448">
    <property type="component" value="Chromosome"/>
</dbReference>
<dbReference type="GO" id="GO:0080146">
    <property type="term" value="F:L-cysteine desulfhydrase activity"/>
    <property type="evidence" value="ECO:0007669"/>
    <property type="project" value="TreeGrafter"/>
</dbReference>
<dbReference type="GO" id="GO:0019450">
    <property type="term" value="P:L-cysteine catabolic process to pyruvate"/>
    <property type="evidence" value="ECO:0007669"/>
    <property type="project" value="TreeGrafter"/>
</dbReference>
<dbReference type="HAMAP" id="MF_01845">
    <property type="entry name" value="UPF0597"/>
    <property type="match status" value="1"/>
</dbReference>
<dbReference type="InterPro" id="IPR005130">
    <property type="entry name" value="Ser_deHydtase-like_asu"/>
</dbReference>
<dbReference type="InterPro" id="IPR021144">
    <property type="entry name" value="UPF0597"/>
</dbReference>
<dbReference type="PANTHER" id="PTHR30501">
    <property type="entry name" value="UPF0597 PROTEIN YHAM"/>
    <property type="match status" value="1"/>
</dbReference>
<dbReference type="PANTHER" id="PTHR30501:SF2">
    <property type="entry name" value="UPF0597 PROTEIN YHAM"/>
    <property type="match status" value="1"/>
</dbReference>
<dbReference type="Pfam" id="PF03313">
    <property type="entry name" value="SDH_alpha"/>
    <property type="match status" value="1"/>
</dbReference>
<dbReference type="PIRSF" id="PIRSF006054">
    <property type="entry name" value="UCP006054"/>
    <property type="match status" value="1"/>
</dbReference>
<gene>
    <name type="ordered locus">NAMH_0191</name>
</gene>
<protein>
    <recommendedName>
        <fullName evidence="1">UPF0597 protein NAMH_0191</fullName>
    </recommendedName>
</protein>
<proteinExistence type="inferred from homology"/>
<comment type="similarity">
    <text evidence="1">Belongs to the UPF0597 family.</text>
</comment>
<organism>
    <name type="scientific">Nautilia profundicola (strain ATCC BAA-1463 / DSM 18972 / AmH)</name>
    <dbReference type="NCBI Taxonomy" id="598659"/>
    <lineage>
        <taxon>Bacteria</taxon>
        <taxon>Pseudomonadati</taxon>
        <taxon>Campylobacterota</taxon>
        <taxon>Epsilonproteobacteria</taxon>
        <taxon>Nautiliales</taxon>
        <taxon>Nautiliaceae</taxon>
        <taxon>Nautilia</taxon>
    </lineage>
</organism>
<sequence length="407" mass="44707">MYTAKEVILSQIKPALGCTEPAAIALNGAYLKEYVKNAKKIQLTINTNLMKNAMYVPIPNTGKKFGVKLAFALGYLCGDKTKGLNVFENIDKKCIEEAEKYINKIELDIVEGREIYIKSEAEGCEVITKKFHDYISSIKTSEKVITFESKNIDNNISDTEKWLKKISFDTLYRLIEKEKDFDFVKNAVDVNFELSKIGLNSDCGLNIGKSYKGDDIFSKIVSITVSASDARMEGVNYPAMSLVGSGNHGISAILPVWVYGKEKNFQENEIFKAVALSMLITIYIKLFIGRLSAICGAAFASGCGVAGGIAYLESNNKEVSKKAVSYVIQDINGVICDGAKMACSLKVRLGAKSGYEAAMFALEGKPVFSDGILENDITKSIQNLSRVSEAMYNVDGSIVEIMKNKII</sequence>
<accession>B9L7K6</accession>
<evidence type="ECO:0000255" key="1">
    <source>
        <dbReference type="HAMAP-Rule" id="MF_01845"/>
    </source>
</evidence>
<feature type="chain" id="PRO_1000188462" description="UPF0597 protein NAMH_0191">
    <location>
        <begin position="1"/>
        <end position="407"/>
    </location>
</feature>
<name>Y191_NAUPA</name>
<reference key="1">
    <citation type="journal article" date="2009" name="PLoS Genet.">
        <title>Adaptations to submarine hydrothermal environments exemplified by the genome of Nautilia profundicola.</title>
        <authorList>
            <person name="Campbell B.J."/>
            <person name="Smith J.L."/>
            <person name="Hanson T.E."/>
            <person name="Klotz M.G."/>
            <person name="Stein L.Y."/>
            <person name="Lee C.K."/>
            <person name="Wu D."/>
            <person name="Robinson J.M."/>
            <person name="Khouri H.M."/>
            <person name="Eisen J.A."/>
            <person name="Cary S.C."/>
        </authorList>
    </citation>
    <scope>NUCLEOTIDE SEQUENCE [LARGE SCALE GENOMIC DNA]</scope>
    <source>
        <strain>ATCC BAA-1463 / DSM 18972 / AmH</strain>
    </source>
</reference>